<name>RS12_BIFLO</name>
<feature type="chain" id="PRO_0000146183" description="Small ribosomal subunit protein uS12">
    <location>
        <begin position="1"/>
        <end position="123"/>
    </location>
</feature>
<feature type="region of interest" description="Disordered" evidence="2">
    <location>
        <begin position="1"/>
        <end position="21"/>
    </location>
</feature>
<feature type="compositionally biased region" description="Basic residues" evidence="2">
    <location>
        <begin position="9"/>
        <end position="20"/>
    </location>
</feature>
<accession>P59162</accession>
<gene>
    <name evidence="1" type="primary">rpsL</name>
    <name type="ordered locus">BL1100</name>
</gene>
<comment type="function">
    <text evidence="1">With S4 and S5 plays an important role in translational accuracy.</text>
</comment>
<comment type="function">
    <text evidence="1">Interacts with and stabilizes bases of the 16S rRNA that are involved in tRNA selection in the A site and with the mRNA backbone. Located at the interface of the 30S and 50S subunits, it traverses the body of the 30S subunit contacting proteins on the other side and probably holding the rRNA structure together. The combined cluster of proteins S8, S12 and S17 appears to hold together the shoulder and platform of the 30S subunit.</text>
</comment>
<comment type="subunit">
    <text evidence="1">Part of the 30S ribosomal subunit. Contacts proteins S8 and S17. May interact with IF1 in the 30S initiation complex.</text>
</comment>
<comment type="similarity">
    <text evidence="1">Belongs to the universal ribosomal protein uS12 family.</text>
</comment>
<comment type="caution">
    <text evidence="3">Because the enzyme that would modify Asp-89 to 3-methylthioaspartic acid has not been found in the proteome of this organism, that modification is not predicted.</text>
</comment>
<protein>
    <recommendedName>
        <fullName evidence="1">Small ribosomal subunit protein uS12</fullName>
    </recommendedName>
    <alternativeName>
        <fullName evidence="3">30S ribosomal protein S12</fullName>
    </alternativeName>
</protein>
<keyword id="KW-1185">Reference proteome</keyword>
<keyword id="KW-0687">Ribonucleoprotein</keyword>
<keyword id="KW-0689">Ribosomal protein</keyword>
<keyword id="KW-0694">RNA-binding</keyword>
<keyword id="KW-0699">rRNA-binding</keyword>
<keyword id="KW-0820">tRNA-binding</keyword>
<proteinExistence type="inferred from homology"/>
<organism>
    <name type="scientific">Bifidobacterium longum (strain NCC 2705)</name>
    <dbReference type="NCBI Taxonomy" id="206672"/>
    <lineage>
        <taxon>Bacteria</taxon>
        <taxon>Bacillati</taxon>
        <taxon>Actinomycetota</taxon>
        <taxon>Actinomycetes</taxon>
        <taxon>Bifidobacteriales</taxon>
        <taxon>Bifidobacteriaceae</taxon>
        <taxon>Bifidobacterium</taxon>
    </lineage>
</organism>
<dbReference type="EMBL" id="AE014295">
    <property type="protein sequence ID" value="AAN24908.1"/>
    <property type="molecule type" value="Genomic_DNA"/>
</dbReference>
<dbReference type="RefSeq" id="NP_696272.1">
    <property type="nucleotide sequence ID" value="NC_004307.2"/>
</dbReference>
<dbReference type="RefSeq" id="WP_003813881.1">
    <property type="nucleotide sequence ID" value="NC_004307.2"/>
</dbReference>
<dbReference type="SMR" id="P59162"/>
<dbReference type="STRING" id="206672.BL1100"/>
<dbReference type="EnsemblBacteria" id="AAN24908">
    <property type="protein sequence ID" value="AAN24908"/>
    <property type="gene ID" value="BL1100"/>
</dbReference>
<dbReference type="GeneID" id="98326543"/>
<dbReference type="KEGG" id="blo:BL1100"/>
<dbReference type="PATRIC" id="fig|206672.9.peg.808"/>
<dbReference type="HOGENOM" id="CLU_104295_1_2_11"/>
<dbReference type="OrthoDB" id="9802366at2"/>
<dbReference type="PhylomeDB" id="P59162"/>
<dbReference type="PRO" id="PR:P59162"/>
<dbReference type="Proteomes" id="UP000000439">
    <property type="component" value="Chromosome"/>
</dbReference>
<dbReference type="GO" id="GO:0015935">
    <property type="term" value="C:small ribosomal subunit"/>
    <property type="evidence" value="ECO:0007669"/>
    <property type="project" value="InterPro"/>
</dbReference>
<dbReference type="GO" id="GO:0019843">
    <property type="term" value="F:rRNA binding"/>
    <property type="evidence" value="ECO:0007669"/>
    <property type="project" value="UniProtKB-UniRule"/>
</dbReference>
<dbReference type="GO" id="GO:0003735">
    <property type="term" value="F:structural constituent of ribosome"/>
    <property type="evidence" value="ECO:0007669"/>
    <property type="project" value="InterPro"/>
</dbReference>
<dbReference type="GO" id="GO:0000049">
    <property type="term" value="F:tRNA binding"/>
    <property type="evidence" value="ECO:0007669"/>
    <property type="project" value="UniProtKB-UniRule"/>
</dbReference>
<dbReference type="GO" id="GO:0006412">
    <property type="term" value="P:translation"/>
    <property type="evidence" value="ECO:0007669"/>
    <property type="project" value="UniProtKB-UniRule"/>
</dbReference>
<dbReference type="CDD" id="cd03368">
    <property type="entry name" value="Ribosomal_S12"/>
    <property type="match status" value="1"/>
</dbReference>
<dbReference type="FunFam" id="2.40.50.140:FF:000001">
    <property type="entry name" value="30S ribosomal protein S12"/>
    <property type="match status" value="1"/>
</dbReference>
<dbReference type="Gene3D" id="2.40.50.140">
    <property type="entry name" value="Nucleic acid-binding proteins"/>
    <property type="match status" value="1"/>
</dbReference>
<dbReference type="HAMAP" id="MF_00403_B">
    <property type="entry name" value="Ribosomal_uS12_B"/>
    <property type="match status" value="1"/>
</dbReference>
<dbReference type="InterPro" id="IPR012340">
    <property type="entry name" value="NA-bd_OB-fold"/>
</dbReference>
<dbReference type="InterPro" id="IPR006032">
    <property type="entry name" value="Ribosomal_uS12"/>
</dbReference>
<dbReference type="InterPro" id="IPR005679">
    <property type="entry name" value="Ribosomal_uS12_bac"/>
</dbReference>
<dbReference type="NCBIfam" id="TIGR00981">
    <property type="entry name" value="rpsL_bact"/>
    <property type="match status" value="1"/>
</dbReference>
<dbReference type="PANTHER" id="PTHR11652">
    <property type="entry name" value="30S RIBOSOMAL PROTEIN S12 FAMILY MEMBER"/>
    <property type="match status" value="1"/>
</dbReference>
<dbReference type="Pfam" id="PF00164">
    <property type="entry name" value="Ribosom_S12_S23"/>
    <property type="match status" value="1"/>
</dbReference>
<dbReference type="PIRSF" id="PIRSF002133">
    <property type="entry name" value="Ribosomal_S12/S23"/>
    <property type="match status" value="1"/>
</dbReference>
<dbReference type="PRINTS" id="PR01034">
    <property type="entry name" value="RIBOSOMALS12"/>
</dbReference>
<dbReference type="SUPFAM" id="SSF50249">
    <property type="entry name" value="Nucleic acid-binding proteins"/>
    <property type="match status" value="1"/>
</dbReference>
<dbReference type="PROSITE" id="PS00055">
    <property type="entry name" value="RIBOSOMAL_S12"/>
    <property type="match status" value="1"/>
</dbReference>
<evidence type="ECO:0000255" key="1">
    <source>
        <dbReference type="HAMAP-Rule" id="MF_00403"/>
    </source>
</evidence>
<evidence type="ECO:0000256" key="2">
    <source>
        <dbReference type="SAM" id="MobiDB-lite"/>
    </source>
</evidence>
<evidence type="ECO:0000305" key="3"/>
<reference key="1">
    <citation type="journal article" date="2002" name="Proc. Natl. Acad. Sci. U.S.A.">
        <title>The genome sequence of Bifidobacterium longum reflects its adaptation to the human gastrointestinal tract.</title>
        <authorList>
            <person name="Schell M.A."/>
            <person name="Karmirantzou M."/>
            <person name="Snel B."/>
            <person name="Vilanova D."/>
            <person name="Berger B."/>
            <person name="Pessi G."/>
            <person name="Zwahlen M.-C."/>
            <person name="Desiere F."/>
            <person name="Bork P."/>
            <person name="Delley M."/>
            <person name="Pridmore R.D."/>
            <person name="Arigoni F."/>
        </authorList>
    </citation>
    <scope>NUCLEOTIDE SEQUENCE [LARGE SCALE GENOMIC DNA]</scope>
    <source>
        <strain>NCC 2705</strain>
    </source>
</reference>
<sequence length="123" mass="13565">MPTIEQLVRKGRQAKPKKSKTLALKGSPLRRGVCTRVYTTTPKKPNSALRKVARVRLSSGIEVTAYIPGEGHNLQEHSIVLVRGGRVKDLPGVRYHIVRGALDTQGVKDRKQGRSLYGAKKAK</sequence>